<feature type="chain" id="PRO_0000295979" description="Small ribosomal subunit protein uS12">
    <location>
        <begin position="1"/>
        <end position="124"/>
    </location>
</feature>
<feature type="region of interest" description="Disordered" evidence="3">
    <location>
        <begin position="102"/>
        <end position="124"/>
    </location>
</feature>
<feature type="compositionally biased region" description="Basic residues" evidence="3">
    <location>
        <begin position="109"/>
        <end position="124"/>
    </location>
</feature>
<feature type="modified residue" description="3-methylthioaspartic acid" evidence="1">
    <location>
        <position position="89"/>
    </location>
</feature>
<sequence>MATINQLVNNPRKRSVVKSKVPALKACPQRRGVCTRVYTTTPKKPNSALRKVARVRLTSRFEVTSYIGGEGHNLQEHSVVLIRGGRVKDLPGVRYHIVRGALDTSGVNNRKHGRSKYGTKRPKS</sequence>
<gene>
    <name evidence="2" type="primary">rpsL</name>
    <name type="ordered locus">FTW_1761</name>
</gene>
<accession>A4IZT8</accession>
<keyword id="KW-0488">Methylation</keyword>
<keyword id="KW-0687">Ribonucleoprotein</keyword>
<keyword id="KW-0689">Ribosomal protein</keyword>
<keyword id="KW-0694">RNA-binding</keyword>
<keyword id="KW-0699">rRNA-binding</keyword>
<keyword id="KW-0820">tRNA-binding</keyword>
<organism>
    <name type="scientific">Francisella tularensis subsp. tularensis (strain WY96-3418)</name>
    <dbReference type="NCBI Taxonomy" id="418136"/>
    <lineage>
        <taxon>Bacteria</taxon>
        <taxon>Pseudomonadati</taxon>
        <taxon>Pseudomonadota</taxon>
        <taxon>Gammaproteobacteria</taxon>
        <taxon>Thiotrichales</taxon>
        <taxon>Francisellaceae</taxon>
        <taxon>Francisella</taxon>
    </lineage>
</organism>
<protein>
    <recommendedName>
        <fullName evidence="2">Small ribosomal subunit protein uS12</fullName>
    </recommendedName>
    <alternativeName>
        <fullName evidence="4">30S ribosomal protein S12</fullName>
    </alternativeName>
</protein>
<dbReference type="EMBL" id="CP000608">
    <property type="protein sequence ID" value="ABO47437.1"/>
    <property type="molecule type" value="Genomic_DNA"/>
</dbReference>
<dbReference type="RefSeq" id="WP_003014323.1">
    <property type="nucleotide sequence ID" value="NC_009257.1"/>
</dbReference>
<dbReference type="SMR" id="A4IZT8"/>
<dbReference type="KEGG" id="ftw:FTW_1761"/>
<dbReference type="HOGENOM" id="CLU_104295_1_2_6"/>
<dbReference type="GO" id="GO:0015935">
    <property type="term" value="C:small ribosomal subunit"/>
    <property type="evidence" value="ECO:0007669"/>
    <property type="project" value="InterPro"/>
</dbReference>
<dbReference type="GO" id="GO:0019843">
    <property type="term" value="F:rRNA binding"/>
    <property type="evidence" value="ECO:0007669"/>
    <property type="project" value="UniProtKB-UniRule"/>
</dbReference>
<dbReference type="GO" id="GO:0003735">
    <property type="term" value="F:structural constituent of ribosome"/>
    <property type="evidence" value="ECO:0007669"/>
    <property type="project" value="InterPro"/>
</dbReference>
<dbReference type="GO" id="GO:0000049">
    <property type="term" value="F:tRNA binding"/>
    <property type="evidence" value="ECO:0007669"/>
    <property type="project" value="UniProtKB-UniRule"/>
</dbReference>
<dbReference type="GO" id="GO:0006412">
    <property type="term" value="P:translation"/>
    <property type="evidence" value="ECO:0007669"/>
    <property type="project" value="UniProtKB-UniRule"/>
</dbReference>
<dbReference type="CDD" id="cd03368">
    <property type="entry name" value="Ribosomal_S12"/>
    <property type="match status" value="1"/>
</dbReference>
<dbReference type="FunFam" id="2.40.50.140:FF:000001">
    <property type="entry name" value="30S ribosomal protein S12"/>
    <property type="match status" value="1"/>
</dbReference>
<dbReference type="Gene3D" id="2.40.50.140">
    <property type="entry name" value="Nucleic acid-binding proteins"/>
    <property type="match status" value="1"/>
</dbReference>
<dbReference type="HAMAP" id="MF_00403_B">
    <property type="entry name" value="Ribosomal_uS12_B"/>
    <property type="match status" value="1"/>
</dbReference>
<dbReference type="InterPro" id="IPR012340">
    <property type="entry name" value="NA-bd_OB-fold"/>
</dbReference>
<dbReference type="InterPro" id="IPR006032">
    <property type="entry name" value="Ribosomal_uS12"/>
</dbReference>
<dbReference type="InterPro" id="IPR005679">
    <property type="entry name" value="Ribosomal_uS12_bac"/>
</dbReference>
<dbReference type="NCBIfam" id="TIGR00981">
    <property type="entry name" value="rpsL_bact"/>
    <property type="match status" value="1"/>
</dbReference>
<dbReference type="PANTHER" id="PTHR11652">
    <property type="entry name" value="30S RIBOSOMAL PROTEIN S12 FAMILY MEMBER"/>
    <property type="match status" value="1"/>
</dbReference>
<dbReference type="Pfam" id="PF00164">
    <property type="entry name" value="Ribosom_S12_S23"/>
    <property type="match status" value="1"/>
</dbReference>
<dbReference type="PIRSF" id="PIRSF002133">
    <property type="entry name" value="Ribosomal_S12/S23"/>
    <property type="match status" value="1"/>
</dbReference>
<dbReference type="PRINTS" id="PR01034">
    <property type="entry name" value="RIBOSOMALS12"/>
</dbReference>
<dbReference type="SUPFAM" id="SSF50249">
    <property type="entry name" value="Nucleic acid-binding proteins"/>
    <property type="match status" value="1"/>
</dbReference>
<dbReference type="PROSITE" id="PS00055">
    <property type="entry name" value="RIBOSOMAL_S12"/>
    <property type="match status" value="1"/>
</dbReference>
<comment type="function">
    <text evidence="2">With S4 and S5 plays an important role in translational accuracy.</text>
</comment>
<comment type="function">
    <text evidence="2">Interacts with and stabilizes bases of the 16S rRNA that are involved in tRNA selection in the A site and with the mRNA backbone. Located at the interface of the 30S and 50S subunits, it traverses the body of the 30S subunit contacting proteins on the other side and probably holding the rRNA structure together. The combined cluster of proteins S8, S12 and S17 appears to hold together the shoulder and platform of the 30S subunit.</text>
</comment>
<comment type="subunit">
    <text evidence="2">Part of the 30S ribosomal subunit. Contacts proteins S8 and S17. May interact with IF1 in the 30S initiation complex.</text>
</comment>
<comment type="similarity">
    <text evidence="2">Belongs to the universal ribosomal protein uS12 family.</text>
</comment>
<evidence type="ECO:0000250" key="1"/>
<evidence type="ECO:0000255" key="2">
    <source>
        <dbReference type="HAMAP-Rule" id="MF_00403"/>
    </source>
</evidence>
<evidence type="ECO:0000256" key="3">
    <source>
        <dbReference type="SAM" id="MobiDB-lite"/>
    </source>
</evidence>
<evidence type="ECO:0000305" key="4"/>
<proteinExistence type="inferred from homology"/>
<reference key="1">
    <citation type="journal article" date="2007" name="PLoS ONE">
        <title>Complete genomic characterization of a pathogenic A.II strain of Francisella tularensis subspecies tularensis.</title>
        <authorList>
            <person name="Beckstrom-Sternberg S.M."/>
            <person name="Auerbach R.K."/>
            <person name="Godbole S."/>
            <person name="Pearson J.V."/>
            <person name="Beckstrom-Sternberg J.S."/>
            <person name="Deng Z."/>
            <person name="Munk C."/>
            <person name="Kubota K."/>
            <person name="Zhou Y."/>
            <person name="Bruce D."/>
            <person name="Noronha J."/>
            <person name="Scheuermann R.H."/>
            <person name="Wang A."/>
            <person name="Wei X."/>
            <person name="Wang J."/>
            <person name="Hao J."/>
            <person name="Wagner D.M."/>
            <person name="Brettin T.S."/>
            <person name="Brown N."/>
            <person name="Gilna P."/>
            <person name="Keim P.S."/>
        </authorList>
    </citation>
    <scope>NUCLEOTIDE SEQUENCE [LARGE SCALE GENOMIC DNA]</scope>
    <source>
        <strain>WY96-3418</strain>
    </source>
</reference>
<name>RS12_FRATW</name>